<sequence>MKRVYFIGIGGIGMSAIARYFHAKGFNVCGYDLTPSPITDQLIKEGIEVHFSDDLNMIPKAFFSPTDSLIVYTPAVPADHSELTYFRSNGYRVVKRAEVLGEITLMERALCVAGTHGKTTTSTLLAHLLKQSHVDCNAFLGGISNNYQSNLLLSDKSDLVVVEADEFDRSFHHLKPFMAIITSADPDHMDIYGTAENYRDSFEHFTSLIQSGGALVLKYGAPVNPRLGSDVSLFTYSSDDQQADYFASDIMIRDGRLFFTWHYPGGQLEGVELGVPVRINVENAVAAMAIAHLNGVTVEELRSGIASFKGSHRRFEKVLDTERVVLIDDYAHHPVELDAAIHSVREIYSGKHIMGIFQPHLYSRTADFYQDFARSLSMLDEVVLLDIYPARELPLPGVTSRLILDLIENPNKTLVSKNDLLDYLHGNEIPDVVLILGAGDIDRLVIPVKQYLQTLC</sequence>
<keyword id="KW-0067">ATP-binding</keyword>
<keyword id="KW-0131">Cell cycle</keyword>
<keyword id="KW-0132">Cell division</keyword>
<keyword id="KW-0133">Cell shape</keyword>
<keyword id="KW-0961">Cell wall biogenesis/degradation</keyword>
<keyword id="KW-0963">Cytoplasm</keyword>
<keyword id="KW-0436">Ligase</keyword>
<keyword id="KW-0547">Nucleotide-binding</keyword>
<keyword id="KW-0573">Peptidoglycan synthesis</keyword>
<keyword id="KW-1185">Reference proteome</keyword>
<comment type="function">
    <text evidence="1">Cell wall formation.</text>
</comment>
<comment type="catalytic activity">
    <reaction>
        <text>UDP-N-acetyl-alpha-D-muramate + L-alanine + ATP = UDP-N-acetyl-alpha-D-muramoyl-L-alanine + ADP + phosphate + H(+)</text>
        <dbReference type="Rhea" id="RHEA:23372"/>
        <dbReference type="ChEBI" id="CHEBI:15378"/>
        <dbReference type="ChEBI" id="CHEBI:30616"/>
        <dbReference type="ChEBI" id="CHEBI:43474"/>
        <dbReference type="ChEBI" id="CHEBI:57972"/>
        <dbReference type="ChEBI" id="CHEBI:70757"/>
        <dbReference type="ChEBI" id="CHEBI:83898"/>
        <dbReference type="ChEBI" id="CHEBI:456216"/>
        <dbReference type="EC" id="6.3.2.8"/>
    </reaction>
</comment>
<comment type="pathway">
    <text>Cell wall biogenesis; peptidoglycan biosynthesis.</text>
</comment>
<comment type="subcellular location">
    <subcellularLocation>
        <location evidence="1">Cytoplasm</location>
    </subcellularLocation>
</comment>
<comment type="similarity">
    <text evidence="3">Belongs to the MurCDEF family.</text>
</comment>
<dbReference type="EC" id="6.3.2.8"/>
<dbReference type="EMBL" id="D84504">
    <property type="protein sequence ID" value="BAA24358.1"/>
    <property type="molecule type" value="Genomic_DNA"/>
</dbReference>
<dbReference type="EMBL" id="AE015924">
    <property type="protein sequence ID" value="AAQ65768.1"/>
    <property type="molecule type" value="Genomic_DNA"/>
</dbReference>
<dbReference type="RefSeq" id="WP_005873943.1">
    <property type="nucleotide sequence ID" value="NC_002950.2"/>
</dbReference>
<dbReference type="SMR" id="Q51831"/>
<dbReference type="STRING" id="242619.PG_0581"/>
<dbReference type="EnsemblBacteria" id="AAQ65768">
    <property type="protein sequence ID" value="AAQ65768"/>
    <property type="gene ID" value="PG_0581"/>
</dbReference>
<dbReference type="KEGG" id="pgi:PG_0581"/>
<dbReference type="PATRIC" id="fig|242619.8.peg.530"/>
<dbReference type="eggNOG" id="COG0773">
    <property type="taxonomic scope" value="Bacteria"/>
</dbReference>
<dbReference type="HOGENOM" id="CLU_028104_2_2_10"/>
<dbReference type="BioCyc" id="PGIN242619:G1G02-539-MONOMER"/>
<dbReference type="UniPathway" id="UPA00219"/>
<dbReference type="Proteomes" id="UP000000588">
    <property type="component" value="Chromosome"/>
</dbReference>
<dbReference type="GO" id="GO:0005737">
    <property type="term" value="C:cytoplasm"/>
    <property type="evidence" value="ECO:0007669"/>
    <property type="project" value="UniProtKB-SubCell"/>
</dbReference>
<dbReference type="GO" id="GO:0005524">
    <property type="term" value="F:ATP binding"/>
    <property type="evidence" value="ECO:0007669"/>
    <property type="project" value="UniProtKB-UniRule"/>
</dbReference>
<dbReference type="GO" id="GO:0008763">
    <property type="term" value="F:UDP-N-acetylmuramate-L-alanine ligase activity"/>
    <property type="evidence" value="ECO:0007669"/>
    <property type="project" value="UniProtKB-UniRule"/>
</dbReference>
<dbReference type="GO" id="GO:0051301">
    <property type="term" value="P:cell division"/>
    <property type="evidence" value="ECO:0007669"/>
    <property type="project" value="UniProtKB-KW"/>
</dbReference>
<dbReference type="GO" id="GO:0071555">
    <property type="term" value="P:cell wall organization"/>
    <property type="evidence" value="ECO:0007669"/>
    <property type="project" value="UniProtKB-KW"/>
</dbReference>
<dbReference type="GO" id="GO:0009252">
    <property type="term" value="P:peptidoglycan biosynthetic process"/>
    <property type="evidence" value="ECO:0007669"/>
    <property type="project" value="UniProtKB-UniRule"/>
</dbReference>
<dbReference type="GO" id="GO:0008360">
    <property type="term" value="P:regulation of cell shape"/>
    <property type="evidence" value="ECO:0007669"/>
    <property type="project" value="UniProtKB-KW"/>
</dbReference>
<dbReference type="Gene3D" id="3.90.190.20">
    <property type="entry name" value="Mur ligase, C-terminal domain"/>
    <property type="match status" value="1"/>
</dbReference>
<dbReference type="Gene3D" id="3.40.1190.10">
    <property type="entry name" value="Mur-like, catalytic domain"/>
    <property type="match status" value="1"/>
</dbReference>
<dbReference type="Gene3D" id="3.40.50.720">
    <property type="entry name" value="NAD(P)-binding Rossmann-like Domain"/>
    <property type="match status" value="1"/>
</dbReference>
<dbReference type="HAMAP" id="MF_00046">
    <property type="entry name" value="MurC"/>
    <property type="match status" value="1"/>
</dbReference>
<dbReference type="InterPro" id="IPR036565">
    <property type="entry name" value="Mur-like_cat_sf"/>
</dbReference>
<dbReference type="InterPro" id="IPR004101">
    <property type="entry name" value="Mur_ligase_C"/>
</dbReference>
<dbReference type="InterPro" id="IPR036615">
    <property type="entry name" value="Mur_ligase_C_dom_sf"/>
</dbReference>
<dbReference type="InterPro" id="IPR013221">
    <property type="entry name" value="Mur_ligase_cen"/>
</dbReference>
<dbReference type="InterPro" id="IPR000713">
    <property type="entry name" value="Mur_ligase_N"/>
</dbReference>
<dbReference type="InterPro" id="IPR050061">
    <property type="entry name" value="MurCDEF_pg_biosynth"/>
</dbReference>
<dbReference type="InterPro" id="IPR005758">
    <property type="entry name" value="UDP-N-AcMur_Ala_ligase_MurC"/>
</dbReference>
<dbReference type="NCBIfam" id="TIGR01082">
    <property type="entry name" value="murC"/>
    <property type="match status" value="1"/>
</dbReference>
<dbReference type="PANTHER" id="PTHR43445:SF3">
    <property type="entry name" value="UDP-N-ACETYLMURAMATE--L-ALANINE LIGASE"/>
    <property type="match status" value="1"/>
</dbReference>
<dbReference type="PANTHER" id="PTHR43445">
    <property type="entry name" value="UDP-N-ACETYLMURAMATE--L-ALANINE LIGASE-RELATED"/>
    <property type="match status" value="1"/>
</dbReference>
<dbReference type="Pfam" id="PF01225">
    <property type="entry name" value="Mur_ligase"/>
    <property type="match status" value="1"/>
</dbReference>
<dbReference type="Pfam" id="PF02875">
    <property type="entry name" value="Mur_ligase_C"/>
    <property type="match status" value="1"/>
</dbReference>
<dbReference type="Pfam" id="PF08245">
    <property type="entry name" value="Mur_ligase_M"/>
    <property type="match status" value="1"/>
</dbReference>
<dbReference type="SUPFAM" id="SSF51984">
    <property type="entry name" value="MurCD N-terminal domain"/>
    <property type="match status" value="1"/>
</dbReference>
<dbReference type="SUPFAM" id="SSF53623">
    <property type="entry name" value="MurD-like peptide ligases, catalytic domain"/>
    <property type="match status" value="1"/>
</dbReference>
<dbReference type="SUPFAM" id="SSF53244">
    <property type="entry name" value="MurD-like peptide ligases, peptide-binding domain"/>
    <property type="match status" value="1"/>
</dbReference>
<gene>
    <name type="primary">murC</name>
    <name type="ordered locus">PG_0581</name>
</gene>
<proteinExistence type="inferred from homology"/>
<accession>Q51831</accession>
<evidence type="ECO:0000250" key="1"/>
<evidence type="ECO:0000255" key="2"/>
<evidence type="ECO:0000305" key="3"/>
<organism>
    <name type="scientific">Porphyromonas gingivalis (strain ATCC BAA-308 / W83)</name>
    <dbReference type="NCBI Taxonomy" id="242619"/>
    <lineage>
        <taxon>Bacteria</taxon>
        <taxon>Pseudomonadati</taxon>
        <taxon>Bacteroidota</taxon>
        <taxon>Bacteroidia</taxon>
        <taxon>Bacteroidales</taxon>
        <taxon>Porphyromonadaceae</taxon>
        <taxon>Porphyromonas</taxon>
    </lineage>
</organism>
<feature type="chain" id="PRO_0000182134" description="UDP-N-acetylmuramate--L-alanine ligase">
    <location>
        <begin position="1"/>
        <end position="456"/>
    </location>
</feature>
<feature type="binding site" evidence="2">
    <location>
        <begin position="114"/>
        <end position="120"/>
    </location>
    <ligand>
        <name>ATP</name>
        <dbReference type="ChEBI" id="CHEBI:30616"/>
    </ligand>
</feature>
<feature type="sequence conflict" description="In Ref. 1; BAA24358." evidence="3" ref="1">
    <original>Q</original>
    <variation>R</variation>
    <location>
        <position position="241"/>
    </location>
</feature>
<feature type="sequence conflict" description="In Ref. 1; BAA24358." evidence="3" ref="1">
    <original>G</original>
    <variation>E</variation>
    <location>
        <position position="270"/>
    </location>
</feature>
<feature type="sequence conflict" description="In Ref. 1; BAA24358." evidence="3" ref="1">
    <original>H</original>
    <variation>R</variation>
    <location>
        <position position="342"/>
    </location>
</feature>
<feature type="sequence conflict" description="In Ref. 1; BAA24358." evidence="3" ref="1">
    <original>R</original>
    <variation>K</variation>
    <location>
        <position position="374"/>
    </location>
</feature>
<feature type="sequence conflict" description="In Ref. 1; BAA24358." evidence="3" ref="1">
    <original>E</original>
    <variation>Q</variation>
    <location>
        <position position="381"/>
    </location>
</feature>
<feature type="sequence conflict" description="In Ref. 1; BAA24358." evidence="3" ref="1">
    <location>
        <begin position="434"/>
        <end position="456"/>
    </location>
</feature>
<name>MURC_PORGI</name>
<protein>
    <recommendedName>
        <fullName>UDP-N-acetylmuramate--L-alanine ligase</fullName>
        <ecNumber>6.3.2.8</ecNumber>
    </recommendedName>
    <alternativeName>
        <fullName>UDP-N-acetylmuramoyl-L-alanine synthetase</fullName>
    </alternativeName>
</protein>
<reference key="1">
    <citation type="journal article" date="1995" name="Microbiology">
        <title>A murC gene in Porphyromonas gingivalis 381.</title>
        <authorList>
            <person name="Ansai T."/>
            <person name="Yamashita Y."/>
            <person name="Awano S."/>
            <person name="Shibata Y."/>
            <person name="Wachi M."/>
            <person name="Nagai K."/>
            <person name="Takehara T."/>
        </authorList>
    </citation>
    <scope>NUCLEOTIDE SEQUENCE [GENOMIC DNA]</scope>
    <source>
        <strain>381</strain>
    </source>
</reference>
<reference key="2">
    <citation type="submission" date="1998-01" db="EMBL/GenBank/DDBJ databases">
        <authorList>
            <person name="Ansai T."/>
        </authorList>
    </citation>
    <scope>SEQUENCE REVISION</scope>
</reference>
<reference key="3">
    <citation type="journal article" date="2003" name="J. Bacteriol.">
        <title>Complete genome sequence of the oral pathogenic bacterium Porphyromonas gingivalis strain W83.</title>
        <authorList>
            <person name="Nelson K.E."/>
            <person name="Fleischmann R.D."/>
            <person name="DeBoy R.T."/>
            <person name="Paulsen I.T."/>
            <person name="Fouts D.E."/>
            <person name="Eisen J.A."/>
            <person name="Daugherty S.C."/>
            <person name="Dodson R.J."/>
            <person name="Durkin A.S."/>
            <person name="Gwinn M.L."/>
            <person name="Haft D.H."/>
            <person name="Kolonay J.F."/>
            <person name="Nelson W.C."/>
            <person name="Mason T.M."/>
            <person name="Tallon L."/>
            <person name="Gray J."/>
            <person name="Granger D."/>
            <person name="Tettelin H."/>
            <person name="Dong H."/>
            <person name="Galvin J.L."/>
            <person name="Duncan M.J."/>
            <person name="Dewhirst F.E."/>
            <person name="Fraser C.M."/>
        </authorList>
    </citation>
    <scope>NUCLEOTIDE SEQUENCE [LARGE SCALE GENOMIC DNA]</scope>
    <source>
        <strain>ATCC BAA-308 / W83</strain>
    </source>
</reference>